<gene>
    <name evidence="1" type="primary">groEL</name>
    <name evidence="1" type="synonym">groL</name>
    <name type="synonym">mopA</name>
</gene>
<proteinExistence type="inferred from homology"/>
<sequence>MSVKQIAFGSKVGESLLNGVIKLANCVQVTLGPNGRNVLIEQSFGDPRVTKDGVTVAKHVELEDRYENLAAQLVKSVASKTADMVGDGTTTATVLARSIYSEAFKGTSAGMNSMELRAGIDHAVEIVVEKLKELSIPVKGDYQKISQVATVSANGDTEIGDMIAQAMEKVGSDGVITVEEAKSFKTELDVVPGMQFDRGYISPYFITRQDKGIAELERSYILLYDGKISSAQSLLPVLEKCAKESASLLIIAEDVEGEALRMLVVNKLRGVLKVAAVKSPGFGDRRKAMLGDIAVLTNGYVVSSEVGMRLEDVRIEDLGRADTIVIEKDNTTVIVNGPARSSVKERCDKIRSEIQEATSDYDKEKLQERLAKLSGGVAVIRVGGATEVELKERKDRVEDAMHATKAAVEEGIIPGGGTAFLRCVKPLEEVIKSAKVQERGRDFICGIDAVRKALSSPCYQIASNAGKEGGVVVAEVLKASDVNVGYDARHDQYVDMIKSGIIDPTKVARTALQNAGSVAGLLNTTEVIIAQVPEKEKPNMGGGMGGGMGGGMDF</sequence>
<reference key="1">
    <citation type="journal article" date="1998" name="J. Eukaryot. Microbiol.">
        <title>Structure and expression of a GroE-homologous operon of a macronucleus-specific symbiont Holospora obtusa of the ciliate Paramecium caudatum.</title>
        <authorList>
            <person name="Dohra H."/>
            <person name="Fujishima M."/>
            <person name="Ishikawa H."/>
        </authorList>
    </citation>
    <scope>NUCLEOTIDE SEQUENCE [GENOMIC DNA]</scope>
</reference>
<comment type="function">
    <text evidence="1">Together with its co-chaperonin GroES, plays an essential role in assisting protein folding. The GroEL-GroES system forms a nano-cage that allows encapsulation of the non-native substrate proteins and provides a physical environment optimized to promote and accelerate protein folding.</text>
</comment>
<comment type="catalytic activity">
    <reaction evidence="1">
        <text>ATP + H2O + a folded polypeptide = ADP + phosphate + an unfolded polypeptide.</text>
        <dbReference type="EC" id="5.6.1.7"/>
    </reaction>
</comment>
<comment type="subunit">
    <text evidence="1">Forms a cylinder of 14 subunits composed of two heptameric rings stacked back-to-back. Interacts with the co-chaperonin GroES.</text>
</comment>
<comment type="subcellular location">
    <subcellularLocation>
        <location evidence="1">Cytoplasm</location>
    </subcellularLocation>
</comment>
<comment type="similarity">
    <text evidence="1">Belongs to the chaperonin (HSP60) family.</text>
</comment>
<keyword id="KW-0067">ATP-binding</keyword>
<keyword id="KW-0143">Chaperone</keyword>
<keyword id="KW-0963">Cytoplasm</keyword>
<keyword id="KW-0413">Isomerase</keyword>
<keyword id="KW-0547">Nucleotide-binding</keyword>
<accession>P94820</accession>
<organism>
    <name type="scientific">Holospora obtusa</name>
    <dbReference type="NCBI Taxonomy" id="49893"/>
    <lineage>
        <taxon>Bacteria</taxon>
        <taxon>Pseudomonadati</taxon>
        <taxon>Pseudomonadota</taxon>
        <taxon>Alphaproteobacteria</taxon>
        <taxon>Holosporales</taxon>
        <taxon>Holosporaceae</taxon>
        <taxon>Holospora</taxon>
    </lineage>
</organism>
<evidence type="ECO:0000255" key="1">
    <source>
        <dbReference type="HAMAP-Rule" id="MF_00600"/>
    </source>
</evidence>
<protein>
    <recommendedName>
        <fullName evidence="1">Chaperonin GroEL</fullName>
        <ecNumber evidence="1">5.6.1.7</ecNumber>
    </recommendedName>
    <alternativeName>
        <fullName evidence="1">60 kDa chaperonin</fullName>
    </alternativeName>
    <alternativeName>
        <fullName evidence="1">Chaperonin-60</fullName>
        <shortName evidence="1">Cpn60</shortName>
    </alternativeName>
</protein>
<name>CH60_HOLOB</name>
<dbReference type="EC" id="5.6.1.7" evidence="1"/>
<dbReference type="EMBL" id="D89970">
    <property type="protein sequence ID" value="BAA14046.1"/>
    <property type="molecule type" value="Genomic_DNA"/>
</dbReference>
<dbReference type="SMR" id="P94820"/>
<dbReference type="GO" id="GO:0005737">
    <property type="term" value="C:cytoplasm"/>
    <property type="evidence" value="ECO:0007669"/>
    <property type="project" value="UniProtKB-SubCell"/>
</dbReference>
<dbReference type="GO" id="GO:0005524">
    <property type="term" value="F:ATP binding"/>
    <property type="evidence" value="ECO:0007669"/>
    <property type="project" value="UniProtKB-UniRule"/>
</dbReference>
<dbReference type="GO" id="GO:0140662">
    <property type="term" value="F:ATP-dependent protein folding chaperone"/>
    <property type="evidence" value="ECO:0007669"/>
    <property type="project" value="InterPro"/>
</dbReference>
<dbReference type="GO" id="GO:0016853">
    <property type="term" value="F:isomerase activity"/>
    <property type="evidence" value="ECO:0007669"/>
    <property type="project" value="UniProtKB-KW"/>
</dbReference>
<dbReference type="GO" id="GO:0051082">
    <property type="term" value="F:unfolded protein binding"/>
    <property type="evidence" value="ECO:0007669"/>
    <property type="project" value="UniProtKB-UniRule"/>
</dbReference>
<dbReference type="GO" id="GO:0042026">
    <property type="term" value="P:protein refolding"/>
    <property type="evidence" value="ECO:0007669"/>
    <property type="project" value="UniProtKB-UniRule"/>
</dbReference>
<dbReference type="CDD" id="cd03344">
    <property type="entry name" value="GroEL"/>
    <property type="match status" value="1"/>
</dbReference>
<dbReference type="FunFam" id="3.50.7.10:FF:000001">
    <property type="entry name" value="60 kDa chaperonin"/>
    <property type="match status" value="1"/>
</dbReference>
<dbReference type="Gene3D" id="3.50.7.10">
    <property type="entry name" value="GroEL"/>
    <property type="match status" value="1"/>
</dbReference>
<dbReference type="Gene3D" id="1.10.560.10">
    <property type="entry name" value="GroEL-like equatorial domain"/>
    <property type="match status" value="1"/>
</dbReference>
<dbReference type="Gene3D" id="3.30.260.10">
    <property type="entry name" value="TCP-1-like chaperonin intermediate domain"/>
    <property type="match status" value="1"/>
</dbReference>
<dbReference type="HAMAP" id="MF_00600">
    <property type="entry name" value="CH60"/>
    <property type="match status" value="1"/>
</dbReference>
<dbReference type="InterPro" id="IPR018370">
    <property type="entry name" value="Chaperonin_Cpn60_CS"/>
</dbReference>
<dbReference type="InterPro" id="IPR001844">
    <property type="entry name" value="Cpn60/GroEL"/>
</dbReference>
<dbReference type="InterPro" id="IPR002423">
    <property type="entry name" value="Cpn60/GroEL/TCP-1"/>
</dbReference>
<dbReference type="InterPro" id="IPR027409">
    <property type="entry name" value="GroEL-like_apical_dom_sf"/>
</dbReference>
<dbReference type="InterPro" id="IPR027413">
    <property type="entry name" value="GROEL-like_equatorial_sf"/>
</dbReference>
<dbReference type="InterPro" id="IPR027410">
    <property type="entry name" value="TCP-1-like_intermed_sf"/>
</dbReference>
<dbReference type="NCBIfam" id="TIGR02348">
    <property type="entry name" value="GroEL"/>
    <property type="match status" value="1"/>
</dbReference>
<dbReference type="NCBIfam" id="NF000592">
    <property type="entry name" value="PRK00013.1"/>
    <property type="match status" value="1"/>
</dbReference>
<dbReference type="NCBIfam" id="NF009487">
    <property type="entry name" value="PRK12849.1"/>
    <property type="match status" value="1"/>
</dbReference>
<dbReference type="NCBIfam" id="NF009488">
    <property type="entry name" value="PRK12850.1"/>
    <property type="match status" value="1"/>
</dbReference>
<dbReference type="NCBIfam" id="NF009489">
    <property type="entry name" value="PRK12851.1"/>
    <property type="match status" value="1"/>
</dbReference>
<dbReference type="PANTHER" id="PTHR45633">
    <property type="entry name" value="60 KDA HEAT SHOCK PROTEIN, MITOCHONDRIAL"/>
    <property type="match status" value="1"/>
</dbReference>
<dbReference type="Pfam" id="PF00118">
    <property type="entry name" value="Cpn60_TCP1"/>
    <property type="match status" value="1"/>
</dbReference>
<dbReference type="PRINTS" id="PR00298">
    <property type="entry name" value="CHAPERONIN60"/>
</dbReference>
<dbReference type="SUPFAM" id="SSF52029">
    <property type="entry name" value="GroEL apical domain-like"/>
    <property type="match status" value="1"/>
</dbReference>
<dbReference type="SUPFAM" id="SSF48592">
    <property type="entry name" value="GroEL equatorial domain-like"/>
    <property type="match status" value="1"/>
</dbReference>
<dbReference type="SUPFAM" id="SSF54849">
    <property type="entry name" value="GroEL-intermediate domain like"/>
    <property type="match status" value="1"/>
</dbReference>
<dbReference type="PROSITE" id="PS00296">
    <property type="entry name" value="CHAPERONINS_CPN60"/>
    <property type="match status" value="1"/>
</dbReference>
<feature type="chain" id="PRO_0000063391" description="Chaperonin GroEL">
    <location>
        <begin position="1"/>
        <end position="554"/>
    </location>
</feature>
<feature type="binding site" evidence="1">
    <location>
        <begin position="30"/>
        <end position="33"/>
    </location>
    <ligand>
        <name>ATP</name>
        <dbReference type="ChEBI" id="CHEBI:30616"/>
    </ligand>
</feature>
<feature type="binding site" evidence="1">
    <location>
        <position position="51"/>
    </location>
    <ligand>
        <name>ATP</name>
        <dbReference type="ChEBI" id="CHEBI:30616"/>
    </ligand>
</feature>
<feature type="binding site" evidence="1">
    <location>
        <begin position="87"/>
        <end position="91"/>
    </location>
    <ligand>
        <name>ATP</name>
        <dbReference type="ChEBI" id="CHEBI:30616"/>
    </ligand>
</feature>
<feature type="binding site" evidence="1">
    <location>
        <position position="416"/>
    </location>
    <ligand>
        <name>ATP</name>
        <dbReference type="ChEBI" id="CHEBI:30616"/>
    </ligand>
</feature>
<feature type="binding site" evidence="1">
    <location>
        <position position="503"/>
    </location>
    <ligand>
        <name>ATP</name>
        <dbReference type="ChEBI" id="CHEBI:30616"/>
    </ligand>
</feature>